<accession>Q1AVU4</accession>
<evidence type="ECO:0000255" key="1">
    <source>
        <dbReference type="HAMAP-Rule" id="MF_00244"/>
    </source>
</evidence>
<dbReference type="EC" id="2.7.7.18" evidence="1"/>
<dbReference type="EMBL" id="CP000386">
    <property type="protein sequence ID" value="ABG04484.1"/>
    <property type="molecule type" value="Genomic_DNA"/>
</dbReference>
<dbReference type="RefSeq" id="WP_011564501.1">
    <property type="nucleotide sequence ID" value="NC_008148.1"/>
</dbReference>
<dbReference type="SMR" id="Q1AVU4"/>
<dbReference type="STRING" id="266117.Rxyl_1522"/>
<dbReference type="KEGG" id="rxy:Rxyl_1522"/>
<dbReference type="eggNOG" id="COG1057">
    <property type="taxonomic scope" value="Bacteria"/>
</dbReference>
<dbReference type="HOGENOM" id="CLU_069765_1_1_11"/>
<dbReference type="OrthoDB" id="5295945at2"/>
<dbReference type="PhylomeDB" id="Q1AVU4"/>
<dbReference type="UniPathway" id="UPA00253">
    <property type="reaction ID" value="UER00332"/>
</dbReference>
<dbReference type="Proteomes" id="UP000006637">
    <property type="component" value="Chromosome"/>
</dbReference>
<dbReference type="GO" id="GO:0005524">
    <property type="term" value="F:ATP binding"/>
    <property type="evidence" value="ECO:0007669"/>
    <property type="project" value="UniProtKB-KW"/>
</dbReference>
<dbReference type="GO" id="GO:0004515">
    <property type="term" value="F:nicotinate-nucleotide adenylyltransferase activity"/>
    <property type="evidence" value="ECO:0007669"/>
    <property type="project" value="UniProtKB-UniRule"/>
</dbReference>
<dbReference type="GO" id="GO:0009435">
    <property type="term" value="P:NAD biosynthetic process"/>
    <property type="evidence" value="ECO:0007669"/>
    <property type="project" value="UniProtKB-UniRule"/>
</dbReference>
<dbReference type="CDD" id="cd02165">
    <property type="entry name" value="NMNAT"/>
    <property type="match status" value="1"/>
</dbReference>
<dbReference type="Gene3D" id="3.40.50.620">
    <property type="entry name" value="HUPs"/>
    <property type="match status" value="1"/>
</dbReference>
<dbReference type="HAMAP" id="MF_00244">
    <property type="entry name" value="NaMN_adenylyltr"/>
    <property type="match status" value="1"/>
</dbReference>
<dbReference type="InterPro" id="IPR004821">
    <property type="entry name" value="Cyt_trans-like"/>
</dbReference>
<dbReference type="InterPro" id="IPR005248">
    <property type="entry name" value="NadD/NMNAT"/>
</dbReference>
<dbReference type="InterPro" id="IPR014729">
    <property type="entry name" value="Rossmann-like_a/b/a_fold"/>
</dbReference>
<dbReference type="NCBIfam" id="TIGR00125">
    <property type="entry name" value="cyt_tran_rel"/>
    <property type="match status" value="1"/>
</dbReference>
<dbReference type="NCBIfam" id="TIGR00482">
    <property type="entry name" value="nicotinate (nicotinamide) nucleotide adenylyltransferase"/>
    <property type="match status" value="1"/>
</dbReference>
<dbReference type="NCBIfam" id="NF000840">
    <property type="entry name" value="PRK00071.1-3"/>
    <property type="match status" value="1"/>
</dbReference>
<dbReference type="PANTHER" id="PTHR39321">
    <property type="entry name" value="NICOTINATE-NUCLEOTIDE ADENYLYLTRANSFERASE-RELATED"/>
    <property type="match status" value="1"/>
</dbReference>
<dbReference type="PANTHER" id="PTHR39321:SF3">
    <property type="entry name" value="PHOSPHOPANTETHEINE ADENYLYLTRANSFERASE"/>
    <property type="match status" value="1"/>
</dbReference>
<dbReference type="Pfam" id="PF01467">
    <property type="entry name" value="CTP_transf_like"/>
    <property type="match status" value="1"/>
</dbReference>
<dbReference type="SUPFAM" id="SSF52374">
    <property type="entry name" value="Nucleotidylyl transferase"/>
    <property type="match status" value="1"/>
</dbReference>
<feature type="chain" id="PRO_0000336731" description="Probable nicotinate-nucleotide adenylyltransferase">
    <location>
        <begin position="1"/>
        <end position="214"/>
    </location>
</feature>
<reference key="1">
    <citation type="submission" date="2006-06" db="EMBL/GenBank/DDBJ databases">
        <title>Complete sequence of Rubrobacter xylanophilus DSM 9941.</title>
        <authorList>
            <consortium name="US DOE Joint Genome Institute"/>
            <person name="Copeland A."/>
            <person name="Lucas S."/>
            <person name="Lapidus A."/>
            <person name="Barry K."/>
            <person name="Detter J.C."/>
            <person name="Glavina del Rio T."/>
            <person name="Hammon N."/>
            <person name="Israni S."/>
            <person name="Dalin E."/>
            <person name="Tice H."/>
            <person name="Pitluck S."/>
            <person name="Munk A.C."/>
            <person name="Brettin T."/>
            <person name="Bruce D."/>
            <person name="Han C."/>
            <person name="Tapia R."/>
            <person name="Gilna P."/>
            <person name="Schmutz J."/>
            <person name="Larimer F."/>
            <person name="Land M."/>
            <person name="Hauser L."/>
            <person name="Kyrpides N."/>
            <person name="Lykidis A."/>
            <person name="da Costa M.S."/>
            <person name="Rainey F.A."/>
            <person name="Empadinhas N."/>
            <person name="Jolivet E."/>
            <person name="Battista J.R."/>
            <person name="Richardson P."/>
        </authorList>
    </citation>
    <scope>NUCLEOTIDE SEQUENCE [LARGE SCALE GENOMIC DNA]</scope>
    <source>
        <strain>DSM 9941 / JCM 11954 / NBRC 16129 / PRD-1</strain>
    </source>
</reference>
<sequence>MRVGIFGGTFDPIHVGHMIVAEQVMDELGMERVVFVPSGIPPHKEASSVRAPAEDRYEMVLAAIAGNERFSADRIEIDAGRPMHTVETVPLLKERLPGEEWFFITGADEVSNLLSWKDPDRLLEEVVMVAATRPGYDLSRLGHLEARLKNFDRIFPVECTRVDVSATGIRRRILQGKSIRYLVPEGVREIILSRGLYRADARRTRGELLKEERS</sequence>
<gene>
    <name evidence="1" type="primary">nadD</name>
    <name type="ordered locus">Rxyl_1522</name>
</gene>
<protein>
    <recommendedName>
        <fullName evidence="1">Probable nicotinate-nucleotide adenylyltransferase</fullName>
        <ecNumber evidence="1">2.7.7.18</ecNumber>
    </recommendedName>
    <alternativeName>
        <fullName evidence="1">Deamido-NAD(+) diphosphorylase</fullName>
    </alternativeName>
    <alternativeName>
        <fullName evidence="1">Deamido-NAD(+) pyrophosphorylase</fullName>
    </alternativeName>
    <alternativeName>
        <fullName evidence="1">Nicotinate mononucleotide adenylyltransferase</fullName>
        <shortName evidence="1">NaMN adenylyltransferase</shortName>
    </alternativeName>
</protein>
<organism>
    <name type="scientific">Rubrobacter xylanophilus (strain DSM 9941 / JCM 11954 / NBRC 16129 / PRD-1)</name>
    <dbReference type="NCBI Taxonomy" id="266117"/>
    <lineage>
        <taxon>Bacteria</taxon>
        <taxon>Bacillati</taxon>
        <taxon>Actinomycetota</taxon>
        <taxon>Rubrobacteria</taxon>
        <taxon>Rubrobacterales</taxon>
        <taxon>Rubrobacteraceae</taxon>
        <taxon>Rubrobacter</taxon>
    </lineage>
</organism>
<keyword id="KW-0067">ATP-binding</keyword>
<keyword id="KW-0520">NAD</keyword>
<keyword id="KW-0547">Nucleotide-binding</keyword>
<keyword id="KW-0548">Nucleotidyltransferase</keyword>
<keyword id="KW-0662">Pyridine nucleotide biosynthesis</keyword>
<keyword id="KW-1185">Reference proteome</keyword>
<keyword id="KW-0808">Transferase</keyword>
<comment type="function">
    <text evidence="1">Catalyzes the reversible adenylation of nicotinate mononucleotide (NaMN) to nicotinic acid adenine dinucleotide (NaAD).</text>
</comment>
<comment type="catalytic activity">
    <reaction evidence="1">
        <text>nicotinate beta-D-ribonucleotide + ATP + H(+) = deamido-NAD(+) + diphosphate</text>
        <dbReference type="Rhea" id="RHEA:22860"/>
        <dbReference type="ChEBI" id="CHEBI:15378"/>
        <dbReference type="ChEBI" id="CHEBI:30616"/>
        <dbReference type="ChEBI" id="CHEBI:33019"/>
        <dbReference type="ChEBI" id="CHEBI:57502"/>
        <dbReference type="ChEBI" id="CHEBI:58437"/>
        <dbReference type="EC" id="2.7.7.18"/>
    </reaction>
</comment>
<comment type="pathway">
    <text evidence="1">Cofactor biosynthesis; NAD(+) biosynthesis; deamido-NAD(+) from nicotinate D-ribonucleotide: step 1/1.</text>
</comment>
<comment type="similarity">
    <text evidence="1">Belongs to the NadD family.</text>
</comment>
<name>NADD_RUBXD</name>
<proteinExistence type="inferred from homology"/>